<protein>
    <recommendedName>
        <fullName evidence="1">Probable cell division protein WhiA</fullName>
    </recommendedName>
</protein>
<name>WHIA_CLOPS</name>
<accession>Q0SW34</accession>
<evidence type="ECO:0000255" key="1">
    <source>
        <dbReference type="HAMAP-Rule" id="MF_01420"/>
    </source>
</evidence>
<dbReference type="EMBL" id="CP000312">
    <property type="protein sequence ID" value="ABG85998.1"/>
    <property type="molecule type" value="Genomic_DNA"/>
</dbReference>
<dbReference type="RefSeq" id="WP_003457993.1">
    <property type="nucleotide sequence ID" value="NZ_CAXVKH010000021.1"/>
</dbReference>
<dbReference type="SMR" id="Q0SW34"/>
<dbReference type="GeneID" id="93003309"/>
<dbReference type="KEGG" id="cpr:CPR_0337"/>
<dbReference type="Proteomes" id="UP000001824">
    <property type="component" value="Chromosome"/>
</dbReference>
<dbReference type="GO" id="GO:0003677">
    <property type="term" value="F:DNA binding"/>
    <property type="evidence" value="ECO:0007669"/>
    <property type="project" value="UniProtKB-UniRule"/>
</dbReference>
<dbReference type="GO" id="GO:0004519">
    <property type="term" value="F:endonuclease activity"/>
    <property type="evidence" value="ECO:0007669"/>
    <property type="project" value="InterPro"/>
</dbReference>
<dbReference type="GO" id="GO:0051301">
    <property type="term" value="P:cell division"/>
    <property type="evidence" value="ECO:0007669"/>
    <property type="project" value="UniProtKB-UniRule"/>
</dbReference>
<dbReference type="GO" id="GO:0043937">
    <property type="term" value="P:regulation of sporulation"/>
    <property type="evidence" value="ECO:0007669"/>
    <property type="project" value="InterPro"/>
</dbReference>
<dbReference type="Gene3D" id="3.10.28.10">
    <property type="entry name" value="Homing endonucleases"/>
    <property type="match status" value="1"/>
</dbReference>
<dbReference type="HAMAP" id="MF_01420">
    <property type="entry name" value="HTH_type_WhiA"/>
    <property type="match status" value="1"/>
</dbReference>
<dbReference type="InterPro" id="IPR027434">
    <property type="entry name" value="Homing_endonucl"/>
</dbReference>
<dbReference type="InterPro" id="IPR004042">
    <property type="entry name" value="Intein_endonuc_central"/>
</dbReference>
<dbReference type="InterPro" id="IPR018478">
    <property type="entry name" value="Sporu_reg_WhiA_N_dom"/>
</dbReference>
<dbReference type="InterPro" id="IPR003802">
    <property type="entry name" value="Sporulation_regulator_WhiA"/>
</dbReference>
<dbReference type="InterPro" id="IPR023054">
    <property type="entry name" value="Sporulation_regulator_WhiA_C"/>
</dbReference>
<dbReference type="InterPro" id="IPR039518">
    <property type="entry name" value="WhiA_LAGLIDADG_dom"/>
</dbReference>
<dbReference type="NCBIfam" id="TIGR00647">
    <property type="entry name" value="DNA_bind_WhiA"/>
    <property type="match status" value="1"/>
</dbReference>
<dbReference type="PANTHER" id="PTHR37307">
    <property type="entry name" value="CELL DIVISION PROTEIN WHIA-RELATED"/>
    <property type="match status" value="1"/>
</dbReference>
<dbReference type="PANTHER" id="PTHR37307:SF1">
    <property type="entry name" value="CELL DIVISION PROTEIN WHIA-RELATED"/>
    <property type="match status" value="1"/>
</dbReference>
<dbReference type="Pfam" id="PF02650">
    <property type="entry name" value="HTH_WhiA"/>
    <property type="match status" value="1"/>
</dbReference>
<dbReference type="Pfam" id="PF14527">
    <property type="entry name" value="LAGLIDADG_WhiA"/>
    <property type="match status" value="1"/>
</dbReference>
<dbReference type="Pfam" id="PF10298">
    <property type="entry name" value="WhiA_N"/>
    <property type="match status" value="1"/>
</dbReference>
<dbReference type="SUPFAM" id="SSF55608">
    <property type="entry name" value="Homing endonucleases"/>
    <property type="match status" value="1"/>
</dbReference>
<dbReference type="PROSITE" id="PS50819">
    <property type="entry name" value="INTEIN_ENDONUCLEASE"/>
    <property type="match status" value="1"/>
</dbReference>
<comment type="function">
    <text evidence="1">Involved in cell division and chromosome segregation.</text>
</comment>
<comment type="similarity">
    <text evidence="1">Belongs to the WhiA family.</text>
</comment>
<sequence>MSFSAKVKGEICRYIDISKEEALAQISAIMKVCGTLAFSGRQISFKMTTENPASARLMFTILKDYFDIHAKLMVKKSNSLKKNNIYMVVVTEEMGVKKLLEITGILREIDGIMSLDYHIDENLVDTEEKKKAYIRGAFIGGGSISNPEKTYHLEFVTHSQEYAEDLGKLINTFGLKAKVIQRKNSYIVYIKEGEQIVDLLNIIGAHTALLELENIRIMKEMRNNVNRLVNCETANLSKTVNAAVRQVESIKLIEREIGLARLPKNLREVAELRLTYPEESLKELGEMLEPPVGKSGVNHRLRKIEKIAEELRTGNF</sequence>
<keyword id="KW-0131">Cell cycle</keyword>
<keyword id="KW-0132">Cell division</keyword>
<keyword id="KW-0238">DNA-binding</keyword>
<organism>
    <name type="scientific">Clostridium perfringens (strain SM101 / Type A)</name>
    <dbReference type="NCBI Taxonomy" id="289380"/>
    <lineage>
        <taxon>Bacteria</taxon>
        <taxon>Bacillati</taxon>
        <taxon>Bacillota</taxon>
        <taxon>Clostridia</taxon>
        <taxon>Eubacteriales</taxon>
        <taxon>Clostridiaceae</taxon>
        <taxon>Clostridium</taxon>
    </lineage>
</organism>
<feature type="chain" id="PRO_0000376468" description="Probable cell division protein WhiA">
    <location>
        <begin position="1"/>
        <end position="316"/>
    </location>
</feature>
<feature type="DNA-binding region" description="H-T-H motif" evidence="1">
    <location>
        <begin position="280"/>
        <end position="313"/>
    </location>
</feature>
<reference key="1">
    <citation type="journal article" date="2006" name="Genome Res.">
        <title>Skewed genomic variability in strains of the toxigenic bacterial pathogen, Clostridium perfringens.</title>
        <authorList>
            <person name="Myers G.S.A."/>
            <person name="Rasko D.A."/>
            <person name="Cheung J.K."/>
            <person name="Ravel J."/>
            <person name="Seshadri R."/>
            <person name="DeBoy R.T."/>
            <person name="Ren Q."/>
            <person name="Varga J."/>
            <person name="Awad M.M."/>
            <person name="Brinkac L.M."/>
            <person name="Daugherty S.C."/>
            <person name="Haft D.H."/>
            <person name="Dodson R.J."/>
            <person name="Madupu R."/>
            <person name="Nelson W.C."/>
            <person name="Rosovitz M.J."/>
            <person name="Sullivan S.A."/>
            <person name="Khouri H."/>
            <person name="Dimitrov G.I."/>
            <person name="Watkins K.L."/>
            <person name="Mulligan S."/>
            <person name="Benton J."/>
            <person name="Radune D."/>
            <person name="Fisher D.J."/>
            <person name="Atkins H.S."/>
            <person name="Hiscox T."/>
            <person name="Jost B.H."/>
            <person name="Billington S.J."/>
            <person name="Songer J.G."/>
            <person name="McClane B.A."/>
            <person name="Titball R.W."/>
            <person name="Rood J.I."/>
            <person name="Melville S.B."/>
            <person name="Paulsen I.T."/>
        </authorList>
    </citation>
    <scope>NUCLEOTIDE SEQUENCE [LARGE SCALE GENOMIC DNA]</scope>
    <source>
        <strain>SM101 / Type A</strain>
    </source>
</reference>
<gene>
    <name evidence="1" type="primary">whiA</name>
    <name type="ordered locus">CPR_0337</name>
</gene>
<proteinExistence type="inferred from homology"/>